<evidence type="ECO:0000250" key="1">
    <source>
        <dbReference type="UniProtKB" id="C0HK89"/>
    </source>
</evidence>
<evidence type="ECO:0000269" key="2">
    <source>
    </source>
</evidence>
<evidence type="ECO:0000303" key="3">
    <source>
    </source>
</evidence>
<evidence type="ECO:0000305" key="4"/>
<evidence type="ECO:0000305" key="5">
    <source>
    </source>
</evidence>
<comment type="function">
    <text evidence="1">Has antibacterial and antifungal activity.</text>
</comment>
<comment type="subcellular location">
    <subcellularLocation>
        <location evidence="2">Secreted</location>
    </subcellularLocation>
</comment>
<comment type="tissue specificity">
    <text evidence="5">Expressed by the skin glands.</text>
</comment>
<comment type="mass spectrometry" mass="2408.2" method="MALDI" evidence="2"/>
<comment type="similarity">
    <text evidence="3">Belongs to the gastrin/cholecystokinin family.</text>
</comment>
<protein>
    <recommendedName>
        <fullName evidence="3">Caerulein precursor fragment B4</fullName>
        <shortName evidence="3">CPF-B4</shortName>
    </recommendedName>
</protein>
<feature type="peptide" id="PRO_0000438432" description="Caerulein precursor fragment B4" evidence="2">
    <location>
        <begin position="1"/>
        <end position="24"/>
    </location>
</feature>
<name>CPFB4_XENBO</name>
<organism evidence="3">
    <name type="scientific">Xenopus borealis</name>
    <name type="common">Kenyan clawed frog</name>
    <dbReference type="NCBI Taxonomy" id="8354"/>
    <lineage>
        <taxon>Eukaryota</taxon>
        <taxon>Metazoa</taxon>
        <taxon>Chordata</taxon>
        <taxon>Craniata</taxon>
        <taxon>Vertebrata</taxon>
        <taxon>Euteleostomi</taxon>
        <taxon>Amphibia</taxon>
        <taxon>Batrachia</taxon>
        <taxon>Anura</taxon>
        <taxon>Pipoidea</taxon>
        <taxon>Pipidae</taxon>
        <taxon>Xenopodinae</taxon>
        <taxon>Xenopus</taxon>
        <taxon>Xenopus</taxon>
    </lineage>
</organism>
<sequence length="24" mass="2409">GLLTNVLGFLKKAGKGVLSGLLPL</sequence>
<reference evidence="4" key="1">
    <citation type="journal article" date="2010" name="Comp. Biochem. Physiol.">
        <title>Antimicrobial peptides with therapeutic potential from skin secretions of the Marsabit clawed frog Xenopus borealis (Pipidae).</title>
        <authorList>
            <person name="Mechkarska M."/>
            <person name="Ahmed E."/>
            <person name="Coquet L."/>
            <person name="Leprince J."/>
            <person name="Jouenne T."/>
            <person name="Vaudry H."/>
            <person name="King J.D."/>
            <person name="Conlon J.M."/>
        </authorList>
    </citation>
    <scope>PROTEIN SEQUENCE</scope>
    <scope>SUBCELLULAR LOCATION</scope>
    <scope>MASS SPECTROMETRY</scope>
    <source>
        <tissue evidence="3">Skin secretion</tissue>
    </source>
</reference>
<proteinExistence type="evidence at protein level"/>
<dbReference type="GO" id="GO:0005576">
    <property type="term" value="C:extracellular region"/>
    <property type="evidence" value="ECO:0007669"/>
    <property type="project" value="UniProtKB-SubCell"/>
</dbReference>
<dbReference type="GO" id="GO:0042742">
    <property type="term" value="P:defense response to bacterium"/>
    <property type="evidence" value="ECO:0007669"/>
    <property type="project" value="UniProtKB-KW"/>
</dbReference>
<dbReference type="GO" id="GO:0050832">
    <property type="term" value="P:defense response to fungus"/>
    <property type="evidence" value="ECO:0007669"/>
    <property type="project" value="UniProtKB-KW"/>
</dbReference>
<dbReference type="GO" id="GO:0031640">
    <property type="term" value="P:killing of cells of another organism"/>
    <property type="evidence" value="ECO:0007669"/>
    <property type="project" value="UniProtKB-KW"/>
</dbReference>
<keyword id="KW-0044">Antibiotic</keyword>
<keyword id="KW-0929">Antimicrobial</keyword>
<keyword id="KW-0903">Direct protein sequencing</keyword>
<keyword id="KW-0295">Fungicide</keyword>
<keyword id="KW-0964">Secreted</keyword>
<accession>C0HK91</accession>